<gene>
    <name type="primary">atpE</name>
    <name type="synonym">atpC</name>
</gene>
<keyword id="KW-0066">ATP synthesis</keyword>
<keyword id="KW-1003">Cell membrane</keyword>
<keyword id="KW-0138">CF(0)</keyword>
<keyword id="KW-0375">Hydrogen ion transport</keyword>
<keyword id="KW-0406">Ion transport</keyword>
<keyword id="KW-0446">Lipid-binding</keyword>
<keyword id="KW-0472">Membrane</keyword>
<keyword id="KW-0812">Transmembrane</keyword>
<keyword id="KW-1133">Transmembrane helix</keyword>
<keyword id="KW-0813">Transport</keyword>
<sequence>MNLTFFGLCLACMGVSLAEGMLMNGLFKSAARQPDIIPQLRSLMIMGIAFIEGTFLVTLVFSFVIK</sequence>
<protein>
    <recommendedName>
        <fullName>ATP synthase subunit c</fullName>
    </recommendedName>
    <alternativeName>
        <fullName>ATP synthase F(0) sector subunit c</fullName>
    </alternativeName>
    <alternativeName>
        <fullName>F-type ATPase subunit c</fullName>
        <shortName>F-ATPase subunit c</shortName>
    </alternativeName>
    <alternativeName>
        <fullName>Lipid-binding protein</fullName>
    </alternativeName>
</protein>
<proteinExistence type="inferred from homology"/>
<accession>P50017</accession>
<evidence type="ECO:0000250" key="1"/>
<evidence type="ECO:0000255" key="2"/>
<evidence type="ECO:0000305" key="3"/>
<reference key="1">
    <citation type="journal article" date="1994" name="Mol. Microbiol.">
        <title>Molecular basis of the optochin-sensitive phenotype of pneumococcus: characterization of the genes encoding the F0 complex of the Streptococcus pneumoniae and Streptococcus oralis H(+)-ATPases.</title>
        <authorList>
            <person name="Fenoll A."/>
            <person name="Munoz R."/>
            <person name="Garcia E."/>
            <person name="de la Campa A.G."/>
        </authorList>
    </citation>
    <scope>NUCLEOTIDE SEQUENCE [GENOMIC DNA]</scope>
    <source>
        <strain>ATCC 35037 / CIP 102922 / DSM 20627 / KCTC 13048 / LMG 14532 / NCTC 11427 / PB182</strain>
        <strain>M222</strain>
    </source>
</reference>
<feature type="chain" id="PRO_0000112168" description="ATP synthase subunit c">
    <location>
        <begin position="1"/>
        <end position="66"/>
    </location>
</feature>
<feature type="transmembrane region" description="Helical" evidence="2">
    <location>
        <begin position="3"/>
        <end position="23"/>
    </location>
</feature>
<feature type="transmembrane region" description="Helical" evidence="2">
    <location>
        <begin position="45"/>
        <end position="65"/>
    </location>
</feature>
<feature type="site" description="Reversibly protonated during proton transport" evidence="1">
    <location>
        <position position="52"/>
    </location>
</feature>
<name>ATPL_STROR</name>
<comment type="function">
    <text evidence="1">F(1)F(0) ATP synthase produces ATP from ADP in the presence of a proton or sodium gradient. F-type ATPases consist of two structural domains, F(1) containing the extramembraneous catalytic core and F(0) containing the membrane proton channel, linked together by a central stalk and a peripheral stalk. During catalysis, ATP synthesis in the catalytic domain of F(1) is coupled via a rotary mechanism of the central stalk subunits to proton translocation (By similarity).</text>
</comment>
<comment type="function">
    <text evidence="1">Key component of the F(0) channel; it plays a direct role in translocation across the membrane. A homomeric c-ring of between 10-14 subunits forms the central stalk rotor element with the F(1) delta and epsilon subunits (By similarity).</text>
</comment>
<comment type="subunit">
    <text evidence="1">F-type ATPases have 2 components, F(1) - the catalytic core - and F(0) - the membrane proton channel. F(1) has five subunits: alpha(3), beta(3), gamma(1), delta(1), epsilon(1). F(0) has three main subunits: a(1), b(2) and c(10-14). The alpha and beta chains form an alternating ring which encloses part of the gamma chain. F(1) is attached to F(0) by a central stalk formed by the gamma and epsilon chains, while a peripheral stalk is formed by the delta and b chains (By similarity).</text>
</comment>
<comment type="subcellular location">
    <subcellularLocation>
        <location evidence="1">Cell membrane</location>
        <topology evidence="1">Multi-pass membrane protein</topology>
    </subcellularLocation>
</comment>
<comment type="miscellaneous">
    <text>M222 is an optochin-resistant (OptR) strain produced by interspecies recombination between S.pneumoniae and S.oralis.</text>
</comment>
<comment type="similarity">
    <text evidence="3">Belongs to the ATPase C chain family.</text>
</comment>
<organism>
    <name type="scientific">Streptococcus oralis</name>
    <dbReference type="NCBI Taxonomy" id="1303"/>
    <lineage>
        <taxon>Bacteria</taxon>
        <taxon>Bacillati</taxon>
        <taxon>Bacillota</taxon>
        <taxon>Bacilli</taxon>
        <taxon>Lactobacillales</taxon>
        <taxon>Streptococcaceae</taxon>
        <taxon>Streptococcus</taxon>
    </lineage>
</organism>
<dbReference type="EMBL" id="Z26850">
    <property type="protein sequence ID" value="CAA81447.1"/>
    <property type="molecule type" value="Genomic_DNA"/>
</dbReference>
<dbReference type="EMBL" id="Z26852">
    <property type="protein sequence ID" value="CAA81455.1"/>
    <property type="molecule type" value="Genomic_DNA"/>
</dbReference>
<dbReference type="PIR" id="S49407">
    <property type="entry name" value="S49407"/>
</dbReference>
<dbReference type="RefSeq" id="WP_001054556.1">
    <property type="nucleotide sequence ID" value="NZ_RMVL01000001.1"/>
</dbReference>
<dbReference type="SMR" id="P50017"/>
<dbReference type="STRING" id="1303.SORDD17_01210"/>
<dbReference type="OMA" id="MNLTFFG"/>
<dbReference type="OrthoDB" id="2357540at2"/>
<dbReference type="GO" id="GO:0005886">
    <property type="term" value="C:plasma membrane"/>
    <property type="evidence" value="ECO:0007669"/>
    <property type="project" value="UniProtKB-SubCell"/>
</dbReference>
<dbReference type="GO" id="GO:0045259">
    <property type="term" value="C:proton-transporting ATP synthase complex"/>
    <property type="evidence" value="ECO:0007669"/>
    <property type="project" value="UniProtKB-KW"/>
</dbReference>
<dbReference type="GO" id="GO:0033177">
    <property type="term" value="C:proton-transporting two-sector ATPase complex, proton-transporting domain"/>
    <property type="evidence" value="ECO:0007669"/>
    <property type="project" value="InterPro"/>
</dbReference>
<dbReference type="GO" id="GO:0008289">
    <property type="term" value="F:lipid binding"/>
    <property type="evidence" value="ECO:0007669"/>
    <property type="project" value="UniProtKB-KW"/>
</dbReference>
<dbReference type="GO" id="GO:0046933">
    <property type="term" value="F:proton-transporting ATP synthase activity, rotational mechanism"/>
    <property type="evidence" value="ECO:0007669"/>
    <property type="project" value="UniProtKB-UniRule"/>
</dbReference>
<dbReference type="CDD" id="cd18121">
    <property type="entry name" value="ATP-synt_Fo_c"/>
    <property type="match status" value="1"/>
</dbReference>
<dbReference type="Gene3D" id="1.20.20.10">
    <property type="entry name" value="F1F0 ATP synthase subunit C"/>
    <property type="match status" value="1"/>
</dbReference>
<dbReference type="HAMAP" id="MF_01396">
    <property type="entry name" value="ATP_synth_c_bact"/>
    <property type="match status" value="1"/>
</dbReference>
<dbReference type="InterPro" id="IPR000454">
    <property type="entry name" value="ATP_synth_F0_csu"/>
</dbReference>
<dbReference type="InterPro" id="IPR020537">
    <property type="entry name" value="ATP_synth_F0_csu_DDCD_BS"/>
</dbReference>
<dbReference type="InterPro" id="IPR038662">
    <property type="entry name" value="ATP_synth_F0_csu_sf"/>
</dbReference>
<dbReference type="InterPro" id="IPR002379">
    <property type="entry name" value="ATPase_proteolipid_c-like_dom"/>
</dbReference>
<dbReference type="InterPro" id="IPR035921">
    <property type="entry name" value="F/V-ATP_Csub_sf"/>
</dbReference>
<dbReference type="NCBIfam" id="NF009997">
    <property type="entry name" value="PRK13467.1"/>
    <property type="match status" value="1"/>
</dbReference>
<dbReference type="Pfam" id="PF00137">
    <property type="entry name" value="ATP-synt_C"/>
    <property type="match status" value="1"/>
</dbReference>
<dbReference type="PRINTS" id="PR00124">
    <property type="entry name" value="ATPASEC"/>
</dbReference>
<dbReference type="SUPFAM" id="SSF81333">
    <property type="entry name" value="F1F0 ATP synthase subunit C"/>
    <property type="match status" value="1"/>
</dbReference>
<dbReference type="PROSITE" id="PS00605">
    <property type="entry name" value="ATPASE_C"/>
    <property type="match status" value="1"/>
</dbReference>